<feature type="chain" id="PRO_0000098619" description="5-methyltetrahydropteroyltriglutamate--homocysteine methyltransferase">
    <location>
        <begin position="1"/>
        <end position="758"/>
    </location>
</feature>
<feature type="active site" description="Proton donor" evidence="1">
    <location>
        <position position="692"/>
    </location>
</feature>
<feature type="binding site" evidence="1">
    <location>
        <begin position="17"/>
        <end position="20"/>
    </location>
    <ligand>
        <name>5-methyltetrahydropteroyltri-L-glutamate</name>
        <dbReference type="ChEBI" id="CHEBI:58207"/>
    </ligand>
</feature>
<feature type="binding site" evidence="1">
    <location>
        <position position="114"/>
    </location>
    <ligand>
        <name>5-methyltetrahydropteroyltri-L-glutamate</name>
        <dbReference type="ChEBI" id="CHEBI:58207"/>
    </ligand>
</feature>
<feature type="binding site" evidence="1">
    <location>
        <begin position="429"/>
        <end position="431"/>
    </location>
    <ligand>
        <name>L-homocysteine</name>
        <dbReference type="ChEBI" id="CHEBI:58199"/>
    </ligand>
</feature>
<feature type="binding site" evidence="1">
    <location>
        <begin position="429"/>
        <end position="431"/>
    </location>
    <ligand>
        <name>L-methionine</name>
        <dbReference type="ChEBI" id="CHEBI:57844"/>
    </ligand>
</feature>
<feature type="binding site" evidence="1">
    <location>
        <position position="482"/>
    </location>
    <ligand>
        <name>L-homocysteine</name>
        <dbReference type="ChEBI" id="CHEBI:58199"/>
    </ligand>
</feature>
<feature type="binding site" evidence="1">
    <location>
        <position position="482"/>
    </location>
    <ligand>
        <name>L-methionine</name>
        <dbReference type="ChEBI" id="CHEBI:57844"/>
    </ligand>
</feature>
<feature type="binding site" evidence="1">
    <location>
        <begin position="513"/>
        <end position="514"/>
    </location>
    <ligand>
        <name>5-methyltetrahydropteroyltri-L-glutamate</name>
        <dbReference type="ChEBI" id="CHEBI:58207"/>
    </ligand>
</feature>
<feature type="binding site" evidence="1">
    <location>
        <position position="559"/>
    </location>
    <ligand>
        <name>5-methyltetrahydropteroyltri-L-glutamate</name>
        <dbReference type="ChEBI" id="CHEBI:58207"/>
    </ligand>
</feature>
<feature type="binding site" evidence="1">
    <location>
        <position position="597"/>
    </location>
    <ligand>
        <name>L-homocysteine</name>
        <dbReference type="ChEBI" id="CHEBI:58199"/>
    </ligand>
</feature>
<feature type="binding site" evidence="1">
    <location>
        <position position="597"/>
    </location>
    <ligand>
        <name>L-methionine</name>
        <dbReference type="ChEBI" id="CHEBI:57844"/>
    </ligand>
</feature>
<feature type="binding site" evidence="1">
    <location>
        <position position="603"/>
    </location>
    <ligand>
        <name>5-methyltetrahydropteroyltri-L-glutamate</name>
        <dbReference type="ChEBI" id="CHEBI:58207"/>
    </ligand>
</feature>
<feature type="binding site" evidence="1">
    <location>
        <position position="639"/>
    </location>
    <ligand>
        <name>Zn(2+)</name>
        <dbReference type="ChEBI" id="CHEBI:29105"/>
        <note>catalytic</note>
    </ligand>
</feature>
<feature type="binding site" evidence="1">
    <location>
        <position position="641"/>
    </location>
    <ligand>
        <name>Zn(2+)</name>
        <dbReference type="ChEBI" id="CHEBI:29105"/>
        <note>catalytic</note>
    </ligand>
</feature>
<feature type="binding site" evidence="1">
    <location>
        <position position="663"/>
    </location>
    <ligand>
        <name>Zn(2+)</name>
        <dbReference type="ChEBI" id="CHEBI:29105"/>
        <note>catalytic</note>
    </ligand>
</feature>
<feature type="binding site" evidence="1">
    <location>
        <position position="724"/>
    </location>
    <ligand>
        <name>Zn(2+)</name>
        <dbReference type="ChEBI" id="CHEBI:29105"/>
        <note>catalytic</note>
    </ligand>
</feature>
<accession>P57142</accession>
<keyword id="KW-0028">Amino-acid biosynthesis</keyword>
<keyword id="KW-0479">Metal-binding</keyword>
<keyword id="KW-0486">Methionine biosynthesis</keyword>
<keyword id="KW-0489">Methyltransferase</keyword>
<keyword id="KW-1185">Reference proteome</keyword>
<keyword id="KW-0677">Repeat</keyword>
<keyword id="KW-0808">Transferase</keyword>
<keyword id="KW-0862">Zinc</keyword>
<dbReference type="EC" id="2.1.1.14" evidence="1"/>
<dbReference type="EMBL" id="BA000003">
    <property type="protein sequence ID" value="BAB12757.1"/>
    <property type="molecule type" value="Genomic_DNA"/>
</dbReference>
<dbReference type="RefSeq" id="NP_239871.1">
    <property type="nucleotide sequence ID" value="NC_002528.1"/>
</dbReference>
<dbReference type="RefSeq" id="WP_009873990.1">
    <property type="nucleotide sequence ID" value="NC_002528.1"/>
</dbReference>
<dbReference type="SMR" id="P57142"/>
<dbReference type="STRING" id="563178.BUAP5A_029"/>
<dbReference type="EnsemblBacteria" id="BAB12757">
    <property type="protein sequence ID" value="BAB12757"/>
    <property type="gene ID" value="BAB12757"/>
</dbReference>
<dbReference type="KEGG" id="buc:BU030"/>
<dbReference type="PATRIC" id="fig|107806.10.peg.42"/>
<dbReference type="eggNOG" id="COG0620">
    <property type="taxonomic scope" value="Bacteria"/>
</dbReference>
<dbReference type="HOGENOM" id="CLU_013175_0_0_6"/>
<dbReference type="UniPathway" id="UPA00051">
    <property type="reaction ID" value="UER00082"/>
</dbReference>
<dbReference type="Proteomes" id="UP000001806">
    <property type="component" value="Chromosome"/>
</dbReference>
<dbReference type="GO" id="GO:0003871">
    <property type="term" value="F:5-methyltetrahydropteroyltriglutamate-homocysteine S-methyltransferase activity"/>
    <property type="evidence" value="ECO:0007669"/>
    <property type="project" value="UniProtKB-UniRule"/>
</dbReference>
<dbReference type="GO" id="GO:0008270">
    <property type="term" value="F:zinc ion binding"/>
    <property type="evidence" value="ECO:0007669"/>
    <property type="project" value="InterPro"/>
</dbReference>
<dbReference type="GO" id="GO:0009086">
    <property type="term" value="P:methionine biosynthetic process"/>
    <property type="evidence" value="ECO:0007669"/>
    <property type="project" value="UniProtKB-UniRule"/>
</dbReference>
<dbReference type="GO" id="GO:0032259">
    <property type="term" value="P:methylation"/>
    <property type="evidence" value="ECO:0007669"/>
    <property type="project" value="UniProtKB-KW"/>
</dbReference>
<dbReference type="CDD" id="cd03311">
    <property type="entry name" value="CIMS_C_terminal_like"/>
    <property type="match status" value="1"/>
</dbReference>
<dbReference type="CDD" id="cd03312">
    <property type="entry name" value="CIMS_N_terminal_like"/>
    <property type="match status" value="1"/>
</dbReference>
<dbReference type="FunFam" id="3.20.20.210:FF:000002">
    <property type="entry name" value="5-methyltetrahydropteroyltriglutamate--homocysteine methyltransferase"/>
    <property type="match status" value="1"/>
</dbReference>
<dbReference type="FunFam" id="3.20.20.210:FF:000003">
    <property type="entry name" value="5-methyltetrahydropteroyltriglutamate--homocysteine methyltransferase"/>
    <property type="match status" value="1"/>
</dbReference>
<dbReference type="Gene3D" id="3.20.20.210">
    <property type="match status" value="2"/>
</dbReference>
<dbReference type="HAMAP" id="MF_00172">
    <property type="entry name" value="Meth_synth"/>
    <property type="match status" value="1"/>
</dbReference>
<dbReference type="InterPro" id="IPR013215">
    <property type="entry name" value="Cbl-indep_Met_Synth_N"/>
</dbReference>
<dbReference type="InterPro" id="IPR006276">
    <property type="entry name" value="Cobalamin-indep_Met_synthase"/>
</dbReference>
<dbReference type="InterPro" id="IPR002629">
    <property type="entry name" value="Met_Synth_C/arc"/>
</dbReference>
<dbReference type="InterPro" id="IPR038071">
    <property type="entry name" value="UROD/MetE-like_sf"/>
</dbReference>
<dbReference type="NCBIfam" id="TIGR01371">
    <property type="entry name" value="met_syn_B12ind"/>
    <property type="match status" value="1"/>
</dbReference>
<dbReference type="NCBIfam" id="NF003556">
    <property type="entry name" value="PRK05222.1"/>
    <property type="match status" value="1"/>
</dbReference>
<dbReference type="PANTHER" id="PTHR30519">
    <property type="entry name" value="5-METHYLTETRAHYDROPTEROYLTRIGLUTAMATE--HOMOCYSTEINE METHYLTRANSFERASE"/>
    <property type="match status" value="1"/>
</dbReference>
<dbReference type="Pfam" id="PF08267">
    <property type="entry name" value="Meth_synt_1"/>
    <property type="match status" value="1"/>
</dbReference>
<dbReference type="Pfam" id="PF01717">
    <property type="entry name" value="Meth_synt_2"/>
    <property type="match status" value="1"/>
</dbReference>
<dbReference type="PIRSF" id="PIRSF000382">
    <property type="entry name" value="MeTrfase_B12_ind"/>
    <property type="match status" value="1"/>
</dbReference>
<dbReference type="SUPFAM" id="SSF51726">
    <property type="entry name" value="UROD/MetE-like"/>
    <property type="match status" value="2"/>
</dbReference>
<sequence length="758" mass="87916">MTILNHTLGFPRIGLNRELKKAQEQYWSGELMIKDLLLVGSELRKKNWQKQKESGIDYIPVGDFAWYDHVLTTSMMLGNIPERHNNTVDSIDLDCLFRIARGCPPDISASEMTKWFNTNYHYIVPEFYKNKVLKYSWKQILDEVDEALLLGHKVKPILLGPITYLWLGKVKGEYFDRLDILKDIILIYKHVLKELSNRSIDFVQIDEPVLVLELPKKWKDAYHYAYKELSGITKLLLTTYFDSIEHNIEFIRDLPVQGIHIDLVHGKYNLKNFSSKIPSEWMLSLGVINGRNIWRSDLLKWFKSIKSISNHHRKILIGSSCSLLHTPIDLVAEKHLDKEVKRWFSFAVQKCEELRLLSSALNDNDIDSIKEWSLPIYERSVSKRVNKIEVENRLSNVLIDKHQRLSPYKTRSIEQNKKFNFPILPTTTIGSFPQTISIRKLRRDFKLGLVTEEEYTKIIKKNIKKVIKIQEELDIDVLVHGEAERNDMVEYFGEHLDGFAFTDNGWVQSYGSRCVKPPIIIGDISRPKPMTIEWSKYAQSLTKKPVKGMLTGPVTILLWSFPREDVSLKKIATQIALALYDEVLDLEKEKIEIIQIDEPALREGLPLRKSSWHEYLSWAVDVFRLSASGVKNTTQIHTHMCYCEFNDIMDSIALLDADVITIEAARSDMELLESFKKFKYPNEVGPGAYDIHSSNIPSVQSIISLLNKAMKYIPLKRIWVNPDCGLKTRNWNETILSLKNMVEATKILREKMKDSECD</sequence>
<organism>
    <name type="scientific">Buchnera aphidicola subsp. Acyrthosiphon pisum (strain APS)</name>
    <name type="common">Acyrthosiphon pisum symbiotic bacterium</name>
    <dbReference type="NCBI Taxonomy" id="107806"/>
    <lineage>
        <taxon>Bacteria</taxon>
        <taxon>Pseudomonadati</taxon>
        <taxon>Pseudomonadota</taxon>
        <taxon>Gammaproteobacteria</taxon>
        <taxon>Enterobacterales</taxon>
        <taxon>Erwiniaceae</taxon>
        <taxon>Buchnera</taxon>
    </lineage>
</organism>
<evidence type="ECO:0000255" key="1">
    <source>
        <dbReference type="HAMAP-Rule" id="MF_00172"/>
    </source>
</evidence>
<evidence type="ECO:0000305" key="2"/>
<protein>
    <recommendedName>
        <fullName evidence="1">5-methyltetrahydropteroyltriglutamate--homocysteine methyltransferase</fullName>
        <ecNumber evidence="1">2.1.1.14</ecNumber>
    </recommendedName>
    <alternativeName>
        <fullName evidence="1">Cobalamin-independent methionine synthase</fullName>
    </alternativeName>
    <alternativeName>
        <fullName evidence="1">Methionine synthase, vitamin-B12 independent isozyme</fullName>
    </alternativeName>
</protein>
<name>METE_BUCAI</name>
<proteinExistence type="inferred from homology"/>
<reference key="1">
    <citation type="journal article" date="2000" name="Nature">
        <title>Genome sequence of the endocellular bacterial symbiont of aphids Buchnera sp. APS.</title>
        <authorList>
            <person name="Shigenobu S."/>
            <person name="Watanabe H."/>
            <person name="Hattori M."/>
            <person name="Sakaki Y."/>
            <person name="Ishikawa H."/>
        </authorList>
    </citation>
    <scope>NUCLEOTIDE SEQUENCE [LARGE SCALE GENOMIC DNA]</scope>
    <source>
        <strain>APS</strain>
    </source>
</reference>
<gene>
    <name evidence="1" type="primary">metE</name>
    <name type="ordered locus">BU030</name>
</gene>
<comment type="function">
    <text evidence="1">Catalyzes the transfer of a methyl group from 5-methyltetrahydrofolate to homocysteine resulting in methionine formation.</text>
</comment>
<comment type="catalytic activity">
    <reaction evidence="1">
        <text>5-methyltetrahydropteroyltri-L-glutamate + L-homocysteine = tetrahydropteroyltri-L-glutamate + L-methionine</text>
        <dbReference type="Rhea" id="RHEA:21196"/>
        <dbReference type="ChEBI" id="CHEBI:57844"/>
        <dbReference type="ChEBI" id="CHEBI:58140"/>
        <dbReference type="ChEBI" id="CHEBI:58199"/>
        <dbReference type="ChEBI" id="CHEBI:58207"/>
        <dbReference type="EC" id="2.1.1.14"/>
    </reaction>
</comment>
<comment type="cofactor">
    <cofactor evidence="1">
        <name>Zn(2+)</name>
        <dbReference type="ChEBI" id="CHEBI:29105"/>
    </cofactor>
    <text evidence="1">Binds 1 zinc ion per subunit.</text>
</comment>
<comment type="pathway">
    <text evidence="1">Amino-acid biosynthesis; L-methionine biosynthesis via de novo pathway; L-methionine from L-homocysteine (MetE route): step 1/1.</text>
</comment>
<comment type="similarity">
    <text evidence="1 2">Belongs to the vitamin-B12 independent methionine synthase family.</text>
</comment>